<name>RIHC_SHIB3</name>
<keyword id="KW-0326">Glycosidase</keyword>
<keyword id="KW-0378">Hydrolase</keyword>
<keyword id="KW-1185">Reference proteome</keyword>
<proteinExistence type="inferred from homology"/>
<comment type="function">
    <text evidence="1">Hydrolyzes both purine and pyrimidine ribonucleosides with a broad-substrate specificity.</text>
</comment>
<comment type="similarity">
    <text evidence="1">Belongs to the IUNH family. RihC subfamily.</text>
</comment>
<feature type="chain" id="PRO_1000145826" description="Non-specific ribonucleoside hydrolase RihC">
    <location>
        <begin position="1"/>
        <end position="304"/>
    </location>
</feature>
<feature type="active site" evidence="1">
    <location>
        <position position="233"/>
    </location>
</feature>
<reference key="1">
    <citation type="submission" date="2008-05" db="EMBL/GenBank/DDBJ databases">
        <title>Complete sequence of Shigella boydii serotype 18 strain BS512.</title>
        <authorList>
            <person name="Rasko D.A."/>
            <person name="Rosovitz M."/>
            <person name="Maurelli A.T."/>
            <person name="Myers G."/>
            <person name="Seshadri R."/>
            <person name="Cer R."/>
            <person name="Jiang L."/>
            <person name="Ravel J."/>
            <person name="Sebastian Y."/>
        </authorList>
    </citation>
    <scope>NUCLEOTIDE SEQUENCE [LARGE SCALE GENOMIC DNA]</scope>
    <source>
        <strain>CDC 3083-94 / BS512</strain>
    </source>
</reference>
<evidence type="ECO:0000255" key="1">
    <source>
        <dbReference type="HAMAP-Rule" id="MF_01432"/>
    </source>
</evidence>
<dbReference type="EC" id="3.2.-.-" evidence="1"/>
<dbReference type="EMBL" id="CP001063">
    <property type="protein sequence ID" value="ACD08293.1"/>
    <property type="molecule type" value="Genomic_DNA"/>
</dbReference>
<dbReference type="RefSeq" id="WP_001239132.1">
    <property type="nucleotide sequence ID" value="NC_010658.1"/>
</dbReference>
<dbReference type="SMR" id="B2U249"/>
<dbReference type="STRING" id="344609.SbBS512_E0034"/>
<dbReference type="KEGG" id="sbc:SbBS512_E0034"/>
<dbReference type="HOGENOM" id="CLU_036838_2_2_6"/>
<dbReference type="Proteomes" id="UP000001030">
    <property type="component" value="Chromosome"/>
</dbReference>
<dbReference type="GO" id="GO:0005829">
    <property type="term" value="C:cytosol"/>
    <property type="evidence" value="ECO:0007669"/>
    <property type="project" value="TreeGrafter"/>
</dbReference>
<dbReference type="GO" id="GO:0008477">
    <property type="term" value="F:purine nucleosidase activity"/>
    <property type="evidence" value="ECO:0007669"/>
    <property type="project" value="TreeGrafter"/>
</dbReference>
<dbReference type="GO" id="GO:0045437">
    <property type="term" value="F:uridine nucleosidase activity"/>
    <property type="evidence" value="ECO:0007669"/>
    <property type="project" value="UniProtKB-ARBA"/>
</dbReference>
<dbReference type="GO" id="GO:0006144">
    <property type="term" value="P:purine nucleobase metabolic process"/>
    <property type="evidence" value="ECO:0007669"/>
    <property type="project" value="UniProtKB-UniRule"/>
</dbReference>
<dbReference type="GO" id="GO:0006152">
    <property type="term" value="P:purine nucleoside catabolic process"/>
    <property type="evidence" value="ECO:0007669"/>
    <property type="project" value="TreeGrafter"/>
</dbReference>
<dbReference type="GO" id="GO:0006206">
    <property type="term" value="P:pyrimidine nucleobase metabolic process"/>
    <property type="evidence" value="ECO:0007669"/>
    <property type="project" value="UniProtKB-UniRule"/>
</dbReference>
<dbReference type="CDD" id="cd02651">
    <property type="entry name" value="nuc_hydro_IU_UC_XIUA"/>
    <property type="match status" value="1"/>
</dbReference>
<dbReference type="FunFam" id="3.90.245.10:FF:000002">
    <property type="entry name" value="Non-specific ribonucleoside hydrolase RihC"/>
    <property type="match status" value="1"/>
</dbReference>
<dbReference type="Gene3D" id="3.90.245.10">
    <property type="entry name" value="Ribonucleoside hydrolase-like"/>
    <property type="match status" value="1"/>
</dbReference>
<dbReference type="HAMAP" id="MF_01432">
    <property type="entry name" value="Nucleosid_hydro_RihC"/>
    <property type="match status" value="1"/>
</dbReference>
<dbReference type="InterPro" id="IPR015910">
    <property type="entry name" value="I/U_nuclsd_hydro_CS"/>
</dbReference>
<dbReference type="InterPro" id="IPR001910">
    <property type="entry name" value="Inosine/uridine_hydrolase_dom"/>
</dbReference>
<dbReference type="InterPro" id="IPR023186">
    <property type="entry name" value="IUNH"/>
</dbReference>
<dbReference type="InterPro" id="IPR022976">
    <property type="entry name" value="Nucleosid_hydro_RihC_nonspecif"/>
</dbReference>
<dbReference type="InterPro" id="IPR036452">
    <property type="entry name" value="Ribo_hydro-like"/>
</dbReference>
<dbReference type="NCBIfam" id="NF008036">
    <property type="entry name" value="PRK10768.1"/>
    <property type="match status" value="1"/>
</dbReference>
<dbReference type="PANTHER" id="PTHR12304">
    <property type="entry name" value="INOSINE-URIDINE PREFERRING NUCLEOSIDE HYDROLASE"/>
    <property type="match status" value="1"/>
</dbReference>
<dbReference type="PANTHER" id="PTHR12304:SF15">
    <property type="entry name" value="NON-SPECIFIC RIBONUCLEOSIDE HYDROLASE RIHC"/>
    <property type="match status" value="1"/>
</dbReference>
<dbReference type="Pfam" id="PF01156">
    <property type="entry name" value="IU_nuc_hydro"/>
    <property type="match status" value="1"/>
</dbReference>
<dbReference type="SUPFAM" id="SSF53590">
    <property type="entry name" value="Nucleoside hydrolase"/>
    <property type="match status" value="1"/>
</dbReference>
<dbReference type="PROSITE" id="PS01247">
    <property type="entry name" value="IUNH"/>
    <property type="match status" value="1"/>
</dbReference>
<gene>
    <name evidence="1" type="primary">rihC</name>
    <name type="ordered locus">SbBS512_E0034</name>
</gene>
<sequence>MRLPIFLDTDPGIDDAVAIAAAIFAPELDLQLMTTVAGNVSVEKTTRNALQLLHFWNAEIPLAQGAAVPLVRAPRDAASVHGESGMAGYDFVEHNRKPLGIPAFLAIRDALMRAPEPVTLVAIGPLTNIALLLSQCPECKPYIRRLVIMGGSAGRGNCTPNAEFNIAADPEAAACVFRSGIEIVMCGLDVTNQAILTPDYLATLPELNRTGKMLHALFSHYRSGSMQSGLRMHDLCAIALLVRPELFTLKPCFVAVETQGEFTSGTTVVDIDGCLGKPANVKVALDLDVKGFQQWVAEVLALAS</sequence>
<accession>B2U249</accession>
<organism>
    <name type="scientific">Shigella boydii serotype 18 (strain CDC 3083-94 / BS512)</name>
    <dbReference type="NCBI Taxonomy" id="344609"/>
    <lineage>
        <taxon>Bacteria</taxon>
        <taxon>Pseudomonadati</taxon>
        <taxon>Pseudomonadota</taxon>
        <taxon>Gammaproteobacteria</taxon>
        <taxon>Enterobacterales</taxon>
        <taxon>Enterobacteriaceae</taxon>
        <taxon>Shigella</taxon>
    </lineage>
</organism>
<protein>
    <recommendedName>
        <fullName evidence="1">Non-specific ribonucleoside hydrolase RihC</fullName>
        <ecNumber evidence="1">3.2.-.-</ecNumber>
    </recommendedName>
    <alternativeName>
        <fullName evidence="1">Purine/pyrimidine ribonucleoside hydrolase</fullName>
    </alternativeName>
</protein>